<organism>
    <name type="scientific">Salmonella paratyphi C (strain RKS4594)</name>
    <dbReference type="NCBI Taxonomy" id="476213"/>
    <lineage>
        <taxon>Bacteria</taxon>
        <taxon>Pseudomonadati</taxon>
        <taxon>Pseudomonadota</taxon>
        <taxon>Gammaproteobacteria</taxon>
        <taxon>Enterobacterales</taxon>
        <taxon>Enterobacteriaceae</taxon>
        <taxon>Salmonella</taxon>
    </lineage>
</organism>
<comment type="catalytic activity">
    <reaction evidence="1">
        <text>Preferential cleavage: (Ac)2-L-Lys-D-Ala-|-D-Ala. Also transpeptidation of peptidyl-alanyl moieties that are N-acyl substituents of D-alanine.</text>
        <dbReference type="EC" id="3.4.16.4"/>
    </reaction>
</comment>
<comment type="subcellular location">
    <subcellularLocation>
        <location evidence="1">Cell inner membrane</location>
        <topology evidence="1">Single-pass membrane protein</topology>
    </subcellularLocation>
</comment>
<comment type="similarity">
    <text evidence="1">Belongs to the peptidase S12 family. YfeW subfamily.</text>
</comment>
<proteinExistence type="inferred from homology"/>
<feature type="chain" id="PRO_1000149446" description="Putative D-alanyl-D-alanine carboxypeptidase">
    <location>
        <begin position="1"/>
        <end position="432"/>
    </location>
</feature>
<feature type="transmembrane region" description="Helical; Signal-anchor" evidence="1">
    <location>
        <begin position="7"/>
        <end position="25"/>
    </location>
</feature>
<name>YFEW_SALPC</name>
<keyword id="KW-0121">Carboxypeptidase</keyword>
<keyword id="KW-0997">Cell inner membrane</keyword>
<keyword id="KW-1003">Cell membrane</keyword>
<keyword id="KW-0378">Hydrolase</keyword>
<keyword id="KW-0472">Membrane</keyword>
<keyword id="KW-0645">Protease</keyword>
<keyword id="KW-0812">Transmembrane</keyword>
<keyword id="KW-1133">Transmembrane helix</keyword>
<gene>
    <name evidence="1" type="primary">yfeW</name>
    <name type="ordered locus">SPC_1182</name>
</gene>
<evidence type="ECO:0000255" key="1">
    <source>
        <dbReference type="HAMAP-Rule" id="MF_01034"/>
    </source>
</evidence>
<reference key="1">
    <citation type="journal article" date="2009" name="PLoS ONE">
        <title>Salmonella paratyphi C: genetic divergence from Salmonella choleraesuis and pathogenic convergence with Salmonella typhi.</title>
        <authorList>
            <person name="Liu W.-Q."/>
            <person name="Feng Y."/>
            <person name="Wang Y."/>
            <person name="Zou Q.-H."/>
            <person name="Chen F."/>
            <person name="Guo J.-T."/>
            <person name="Peng Y.-H."/>
            <person name="Jin Y."/>
            <person name="Li Y.-G."/>
            <person name="Hu S.-N."/>
            <person name="Johnston R.N."/>
            <person name="Liu G.-R."/>
            <person name="Liu S.-L."/>
        </authorList>
    </citation>
    <scope>NUCLEOTIDE SEQUENCE [LARGE SCALE GENOMIC DNA]</scope>
    <source>
        <strain>RKS4594</strain>
    </source>
</reference>
<sequence>MKFTLVATVLLTFSLSAFAVEYPVLTTASPDQVGFDSQKLHRLDGWIQNQIDAGYPSINLLVIKDNHIVLQKAWGYAKKYDGSTLLAHPIRATTNTMYDLASNTKMYATNFALQKLVYEGKIDVNDLVSKYIPGFKDMPGDKIKGKDKLRIIDILHHVAGFPADPQYPNKNVAGKLFSQSKSTTLEMIKKTPLEYQPGSKHIYSDVDYMILGFIIESITAMPLDRYVETTIYKPLGLKHTVFNPLMKGFTPPQIAATELHGNTRDGVIHFPNIRTNTLWGQVHDEKAWYSMGGVSGHAGLFSDTHDMAVLMQVMLNGGGYGNVKLFDDKTVAQFTRRSPEDATFGLGWRVNGNASMTPTFGVLASPQTYGHTGWTGTLTSIDPVNHMAIVILGNRPHSPVANPKVNPNVFVSGLLPAATYGWIVDQIYGSLK</sequence>
<protein>
    <recommendedName>
        <fullName evidence="1">Putative D-alanyl-D-alanine carboxypeptidase</fullName>
        <ecNumber evidence="1">3.4.16.4</ecNumber>
    </recommendedName>
    <alternativeName>
        <fullName evidence="1">DD-carboxypeptidase</fullName>
        <shortName evidence="1">DD-CPase</shortName>
    </alternativeName>
</protein>
<accession>C0PZ64</accession>
<dbReference type="EC" id="3.4.16.4" evidence="1"/>
<dbReference type="EMBL" id="CP000857">
    <property type="protein sequence ID" value="ACN45347.1"/>
    <property type="molecule type" value="Genomic_DNA"/>
</dbReference>
<dbReference type="SMR" id="C0PZ64"/>
<dbReference type="MEROPS" id="S12.A03"/>
<dbReference type="KEGG" id="sei:SPC_1182"/>
<dbReference type="HOGENOM" id="CLU_020027_1_2_6"/>
<dbReference type="Proteomes" id="UP000001599">
    <property type="component" value="Chromosome"/>
</dbReference>
<dbReference type="GO" id="GO:0005886">
    <property type="term" value="C:plasma membrane"/>
    <property type="evidence" value="ECO:0007669"/>
    <property type="project" value="UniProtKB-SubCell"/>
</dbReference>
<dbReference type="GO" id="GO:0009002">
    <property type="term" value="F:serine-type D-Ala-D-Ala carboxypeptidase activity"/>
    <property type="evidence" value="ECO:0007669"/>
    <property type="project" value="UniProtKB-UniRule"/>
</dbReference>
<dbReference type="GO" id="GO:0006508">
    <property type="term" value="P:proteolysis"/>
    <property type="evidence" value="ECO:0007669"/>
    <property type="project" value="UniProtKB-KW"/>
</dbReference>
<dbReference type="Gene3D" id="3.40.710.10">
    <property type="entry name" value="DD-peptidase/beta-lactamase superfamily"/>
    <property type="match status" value="1"/>
</dbReference>
<dbReference type="HAMAP" id="MF_01034">
    <property type="entry name" value="S12_YfeW"/>
    <property type="match status" value="1"/>
</dbReference>
<dbReference type="InterPro" id="IPR001466">
    <property type="entry name" value="Beta-lactam-related"/>
</dbReference>
<dbReference type="InterPro" id="IPR012338">
    <property type="entry name" value="Beta-lactam/transpept-like"/>
</dbReference>
<dbReference type="InterPro" id="IPR050789">
    <property type="entry name" value="Diverse_Enzym_Activities"/>
</dbReference>
<dbReference type="InterPro" id="IPR022849">
    <property type="entry name" value="Pept_S12_YfeW/YbbE-like"/>
</dbReference>
<dbReference type="NCBIfam" id="NF002968">
    <property type="entry name" value="PRK03642.1"/>
    <property type="match status" value="1"/>
</dbReference>
<dbReference type="PANTHER" id="PTHR43283">
    <property type="entry name" value="BETA-LACTAMASE-RELATED"/>
    <property type="match status" value="1"/>
</dbReference>
<dbReference type="PANTHER" id="PTHR43283:SF11">
    <property type="entry name" value="BETA-LACTAMASE-RELATED DOMAIN-CONTAINING PROTEIN"/>
    <property type="match status" value="1"/>
</dbReference>
<dbReference type="Pfam" id="PF00144">
    <property type="entry name" value="Beta-lactamase"/>
    <property type="match status" value="1"/>
</dbReference>
<dbReference type="SUPFAM" id="SSF56601">
    <property type="entry name" value="beta-lactamase/transpeptidase-like"/>
    <property type="match status" value="1"/>
</dbReference>